<organism>
    <name type="scientific">Ochrosphaera neapolitana</name>
    <dbReference type="NCBI Taxonomy" id="35137"/>
    <lineage>
        <taxon>Eukaryota</taxon>
        <taxon>Haptista</taxon>
        <taxon>Haptophyta</taxon>
        <taxon>Prymnesiophyceae</taxon>
        <taxon>Coccolithales</taxon>
        <taxon>Hymenomonadaceae</taxon>
        <taxon>Ochrosphaera</taxon>
    </lineage>
</organism>
<evidence type="ECO:0000255" key="1">
    <source>
        <dbReference type="HAMAP-Rule" id="MF_01346"/>
    </source>
</evidence>
<comment type="function">
    <text evidence="1">Produces ATP from ADP in the presence of a proton gradient across the membrane. The alpha chain is a regulatory subunit.</text>
</comment>
<comment type="catalytic activity">
    <reaction evidence="1">
        <text>ATP + H2O + 4 H(+)(in) = ADP + phosphate + 5 H(+)(out)</text>
        <dbReference type="Rhea" id="RHEA:57720"/>
        <dbReference type="ChEBI" id="CHEBI:15377"/>
        <dbReference type="ChEBI" id="CHEBI:15378"/>
        <dbReference type="ChEBI" id="CHEBI:30616"/>
        <dbReference type="ChEBI" id="CHEBI:43474"/>
        <dbReference type="ChEBI" id="CHEBI:456216"/>
        <dbReference type="EC" id="7.1.2.2"/>
    </reaction>
</comment>
<comment type="subunit">
    <text evidence="1">F-type ATPases have 2 components, CF(1) - the catalytic core - and CF(0) - the membrane proton channel. CF(1) has five subunits: alpha(3), beta(3), gamma(1), delta(1), epsilon(1). CF(0) has four main subunits: a, b, b' and c.</text>
</comment>
<comment type="subcellular location">
    <subcellularLocation>
        <location evidence="1">Plastid</location>
        <location evidence="1">Chloroplast thylakoid membrane</location>
        <topology evidence="1">Peripheral membrane protein</topology>
    </subcellularLocation>
</comment>
<comment type="similarity">
    <text evidence="1">Belongs to the ATPase alpha/beta chains family.</text>
</comment>
<dbReference type="EC" id="7.1.2.2" evidence="1"/>
<dbReference type="EMBL" id="X99078">
    <property type="protein sequence ID" value="CAA67540.1"/>
    <property type="molecule type" value="Genomic_DNA"/>
</dbReference>
<dbReference type="SMR" id="Q40611"/>
<dbReference type="GO" id="GO:0009535">
    <property type="term" value="C:chloroplast thylakoid membrane"/>
    <property type="evidence" value="ECO:0007669"/>
    <property type="project" value="UniProtKB-SubCell"/>
</dbReference>
<dbReference type="GO" id="GO:0045259">
    <property type="term" value="C:proton-transporting ATP synthase complex"/>
    <property type="evidence" value="ECO:0007669"/>
    <property type="project" value="UniProtKB-KW"/>
</dbReference>
<dbReference type="GO" id="GO:0043531">
    <property type="term" value="F:ADP binding"/>
    <property type="evidence" value="ECO:0007669"/>
    <property type="project" value="TreeGrafter"/>
</dbReference>
<dbReference type="GO" id="GO:0005524">
    <property type="term" value="F:ATP binding"/>
    <property type="evidence" value="ECO:0007669"/>
    <property type="project" value="UniProtKB-KW"/>
</dbReference>
<dbReference type="GO" id="GO:0046933">
    <property type="term" value="F:proton-transporting ATP synthase activity, rotational mechanism"/>
    <property type="evidence" value="ECO:0007669"/>
    <property type="project" value="InterPro"/>
</dbReference>
<dbReference type="CDD" id="cd18113">
    <property type="entry name" value="ATP-synt_F1_alpha_C"/>
    <property type="match status" value="1"/>
</dbReference>
<dbReference type="CDD" id="cd18116">
    <property type="entry name" value="ATP-synt_F1_alpha_N"/>
    <property type="match status" value="1"/>
</dbReference>
<dbReference type="CDD" id="cd01132">
    <property type="entry name" value="F1-ATPase_alpha_CD"/>
    <property type="match status" value="1"/>
</dbReference>
<dbReference type="FunFam" id="2.40.30.20:FF:000001">
    <property type="entry name" value="ATP synthase subunit alpha"/>
    <property type="match status" value="1"/>
</dbReference>
<dbReference type="FunFam" id="3.40.50.300:FF:000002">
    <property type="entry name" value="ATP synthase subunit alpha"/>
    <property type="match status" value="1"/>
</dbReference>
<dbReference type="Gene3D" id="2.40.30.20">
    <property type="match status" value="1"/>
</dbReference>
<dbReference type="Gene3D" id="1.20.150.20">
    <property type="entry name" value="ATP synthase alpha/beta chain, C-terminal domain"/>
    <property type="match status" value="1"/>
</dbReference>
<dbReference type="Gene3D" id="3.40.50.300">
    <property type="entry name" value="P-loop containing nucleotide triphosphate hydrolases"/>
    <property type="match status" value="1"/>
</dbReference>
<dbReference type="HAMAP" id="MF_01346">
    <property type="entry name" value="ATP_synth_alpha_bact"/>
    <property type="match status" value="1"/>
</dbReference>
<dbReference type="InterPro" id="IPR023366">
    <property type="entry name" value="ATP_synth_asu-like_sf"/>
</dbReference>
<dbReference type="InterPro" id="IPR000793">
    <property type="entry name" value="ATP_synth_asu_C"/>
</dbReference>
<dbReference type="InterPro" id="IPR038376">
    <property type="entry name" value="ATP_synth_asu_C_sf"/>
</dbReference>
<dbReference type="InterPro" id="IPR033732">
    <property type="entry name" value="ATP_synth_F1_a_nt-bd_dom"/>
</dbReference>
<dbReference type="InterPro" id="IPR005294">
    <property type="entry name" value="ATP_synth_F1_asu"/>
</dbReference>
<dbReference type="InterPro" id="IPR020003">
    <property type="entry name" value="ATPase_a/bsu_AS"/>
</dbReference>
<dbReference type="InterPro" id="IPR004100">
    <property type="entry name" value="ATPase_F1/V1/A1_a/bsu_N"/>
</dbReference>
<dbReference type="InterPro" id="IPR036121">
    <property type="entry name" value="ATPase_F1/V1/A1_a/bsu_N_sf"/>
</dbReference>
<dbReference type="InterPro" id="IPR000194">
    <property type="entry name" value="ATPase_F1/V1/A1_a/bsu_nucl-bd"/>
</dbReference>
<dbReference type="InterPro" id="IPR027417">
    <property type="entry name" value="P-loop_NTPase"/>
</dbReference>
<dbReference type="NCBIfam" id="TIGR00962">
    <property type="entry name" value="atpA"/>
    <property type="match status" value="1"/>
</dbReference>
<dbReference type="NCBIfam" id="NF009884">
    <property type="entry name" value="PRK13343.1"/>
    <property type="match status" value="1"/>
</dbReference>
<dbReference type="PANTHER" id="PTHR48082">
    <property type="entry name" value="ATP SYNTHASE SUBUNIT ALPHA, MITOCHONDRIAL"/>
    <property type="match status" value="1"/>
</dbReference>
<dbReference type="PANTHER" id="PTHR48082:SF2">
    <property type="entry name" value="ATP SYNTHASE SUBUNIT ALPHA, MITOCHONDRIAL"/>
    <property type="match status" value="1"/>
</dbReference>
<dbReference type="Pfam" id="PF00006">
    <property type="entry name" value="ATP-synt_ab"/>
    <property type="match status" value="1"/>
</dbReference>
<dbReference type="Pfam" id="PF00306">
    <property type="entry name" value="ATP-synt_ab_C"/>
    <property type="match status" value="1"/>
</dbReference>
<dbReference type="Pfam" id="PF02874">
    <property type="entry name" value="ATP-synt_ab_N"/>
    <property type="match status" value="1"/>
</dbReference>
<dbReference type="SUPFAM" id="SSF47917">
    <property type="entry name" value="C-terminal domain of alpha and beta subunits of F1 ATP synthase"/>
    <property type="match status" value="1"/>
</dbReference>
<dbReference type="SUPFAM" id="SSF50615">
    <property type="entry name" value="N-terminal domain of alpha and beta subunits of F1 ATP synthase"/>
    <property type="match status" value="1"/>
</dbReference>
<dbReference type="SUPFAM" id="SSF52540">
    <property type="entry name" value="P-loop containing nucleoside triphosphate hydrolases"/>
    <property type="match status" value="1"/>
</dbReference>
<dbReference type="PROSITE" id="PS00152">
    <property type="entry name" value="ATPASE_ALPHA_BETA"/>
    <property type="match status" value="1"/>
</dbReference>
<gene>
    <name evidence="1" type="primary">atpA</name>
</gene>
<accession>Q40611</accession>
<protein>
    <recommendedName>
        <fullName evidence="1">ATP synthase subunit alpha, chloroplastic</fullName>
        <ecNumber evidence="1">7.1.2.2</ecNumber>
    </recommendedName>
    <alternativeName>
        <fullName evidence="1">ATP synthase F1 sector subunit alpha</fullName>
    </alternativeName>
    <alternativeName>
        <fullName evidence="1">F-ATPase subunit alpha</fullName>
    </alternativeName>
</protein>
<proteinExistence type="inferred from homology"/>
<keyword id="KW-0066">ATP synthesis</keyword>
<keyword id="KW-0067">ATP-binding</keyword>
<keyword id="KW-0139">CF(1)</keyword>
<keyword id="KW-0150">Chloroplast</keyword>
<keyword id="KW-0375">Hydrogen ion transport</keyword>
<keyword id="KW-0406">Ion transport</keyword>
<keyword id="KW-0472">Membrane</keyword>
<keyword id="KW-0547">Nucleotide-binding</keyword>
<keyword id="KW-0934">Plastid</keyword>
<keyword id="KW-0793">Thylakoid</keyword>
<keyword id="KW-1278">Translocase</keyword>
<keyword id="KW-0813">Transport</keyword>
<geneLocation type="chloroplast"/>
<reference key="1">
    <citation type="submission" date="1996-07" db="EMBL/GenBank/DDBJ databases">
        <authorList>
            <person name="Huss V.A.R."/>
            <person name="Tietze A.C."/>
            <person name="Julius C."/>
        </authorList>
    </citation>
    <scope>NUCLEOTIDE SEQUENCE [GENOMIC DNA]</scope>
    <source>
        <strain>CCMP593 / OCHRO / Plymouth163</strain>
    </source>
</reference>
<sequence>MINIRPDEISNIIRQQIESYDQEVQIDNVGTVLQVGDGIARVYGLEQVMAGELLEFEDKTVGIALNLENDNVGVVLMGPGLDILEGGSVRSTGKIAQIPVGDGFLGRVVDSLARPIDGKGDIDATESRLVESMAPGIITRKSVCEPVQTGITAIDSMIPIGRGQRELIIGDRQTGKTSVAIDTIINQKSEDVICVYVAIGQKASSVASIVTTLEEKGALGYTIVVASNADDPATLQYIAPYTGAALAEYFMYKGKATLIIYDDLSKQASAYRQMSLLLRRPPGREAYPGDVFYLHSRLLERAAKLSDALGGGSMTALPIIETQAGDVSAYIPTNVISITDGQIFLSGDLFNAGIRPAINVGISVSRVGSAAQTKAMKQVAGKLKLELAQFAELEAFSQFASDLDAATQAELARGQRLREMLKQPQNSPIPVEEQVALI</sequence>
<name>ATPA_OCHNE</name>
<feature type="chain" id="PRO_0000144383" description="ATP synthase subunit alpha, chloroplastic">
    <location>
        <begin position="1"/>
        <end position="438" status="greater than"/>
    </location>
</feature>
<feature type="binding site" evidence="1">
    <location>
        <begin position="170"/>
        <end position="177"/>
    </location>
    <ligand>
        <name>ATP</name>
        <dbReference type="ChEBI" id="CHEBI:30616"/>
    </ligand>
</feature>
<feature type="site" description="Required for activity" evidence="1">
    <location>
        <position position="363"/>
    </location>
</feature>
<feature type="non-terminal residue">
    <location>
        <position position="438"/>
    </location>
</feature>